<name>YCJF_ECO45</name>
<dbReference type="EMBL" id="CU928161">
    <property type="protein sequence ID" value="CAR02784.1"/>
    <property type="molecule type" value="Genomic_DNA"/>
</dbReference>
<dbReference type="RefSeq" id="WP_000138728.1">
    <property type="nucleotide sequence ID" value="NC_011742.1"/>
</dbReference>
<dbReference type="SMR" id="B7MLZ8"/>
<dbReference type="KEGG" id="ecz:ECS88_1464"/>
<dbReference type="HOGENOM" id="CLU_057693_2_0_6"/>
<dbReference type="Proteomes" id="UP000000747">
    <property type="component" value="Chromosome"/>
</dbReference>
<dbReference type="GO" id="GO:0005886">
    <property type="term" value="C:plasma membrane"/>
    <property type="evidence" value="ECO:0007669"/>
    <property type="project" value="UniProtKB-SubCell"/>
</dbReference>
<dbReference type="HAMAP" id="MF_01085">
    <property type="entry name" value="UPF0283"/>
    <property type="match status" value="1"/>
</dbReference>
<dbReference type="InterPro" id="IPR021147">
    <property type="entry name" value="DUF697"/>
</dbReference>
<dbReference type="InterPro" id="IPR006507">
    <property type="entry name" value="UPF0283"/>
</dbReference>
<dbReference type="NCBIfam" id="TIGR01620">
    <property type="entry name" value="hyp_HI0043"/>
    <property type="match status" value="1"/>
</dbReference>
<dbReference type="PANTHER" id="PTHR39342">
    <property type="entry name" value="UPF0283 MEMBRANE PROTEIN YCJF"/>
    <property type="match status" value="1"/>
</dbReference>
<dbReference type="PANTHER" id="PTHR39342:SF1">
    <property type="entry name" value="UPF0283 MEMBRANE PROTEIN YCJF"/>
    <property type="match status" value="1"/>
</dbReference>
<dbReference type="Pfam" id="PF05128">
    <property type="entry name" value="DUF697"/>
    <property type="match status" value="1"/>
</dbReference>
<reference key="1">
    <citation type="journal article" date="2009" name="PLoS Genet.">
        <title>Organised genome dynamics in the Escherichia coli species results in highly diverse adaptive paths.</title>
        <authorList>
            <person name="Touchon M."/>
            <person name="Hoede C."/>
            <person name="Tenaillon O."/>
            <person name="Barbe V."/>
            <person name="Baeriswyl S."/>
            <person name="Bidet P."/>
            <person name="Bingen E."/>
            <person name="Bonacorsi S."/>
            <person name="Bouchier C."/>
            <person name="Bouvet O."/>
            <person name="Calteau A."/>
            <person name="Chiapello H."/>
            <person name="Clermont O."/>
            <person name="Cruveiller S."/>
            <person name="Danchin A."/>
            <person name="Diard M."/>
            <person name="Dossat C."/>
            <person name="Karoui M.E."/>
            <person name="Frapy E."/>
            <person name="Garry L."/>
            <person name="Ghigo J.M."/>
            <person name="Gilles A.M."/>
            <person name="Johnson J."/>
            <person name="Le Bouguenec C."/>
            <person name="Lescat M."/>
            <person name="Mangenot S."/>
            <person name="Martinez-Jehanne V."/>
            <person name="Matic I."/>
            <person name="Nassif X."/>
            <person name="Oztas S."/>
            <person name="Petit M.A."/>
            <person name="Pichon C."/>
            <person name="Rouy Z."/>
            <person name="Ruf C.S."/>
            <person name="Schneider D."/>
            <person name="Tourret J."/>
            <person name="Vacherie B."/>
            <person name="Vallenet D."/>
            <person name="Medigue C."/>
            <person name="Rocha E.P.C."/>
            <person name="Denamur E."/>
        </authorList>
    </citation>
    <scope>NUCLEOTIDE SEQUENCE [LARGE SCALE GENOMIC DNA]</scope>
    <source>
        <strain>S88 / ExPEC</strain>
    </source>
</reference>
<sequence>MTEPLKPRIDFDGPLEVDQNPKFRAQQTFDENQAQNFAPATLDEAQEEEGQVEAVMDAALRPKRSLWRKMVMGGLALFGASVVGQGVQWTMNAWQTQDWVALGGCAAGALIIGAGVGSVVTEWRRLWRLRQRAHERDEARDLLHSHGTGKGRAFCEKLAQQAGIDQSHPALQRWYASIHETQNDREVVSLYAHLVQPVLDAQARREISRSAAESTLMIAVSPLALVDMAFIAWRNLRLINRIATLYGIELGYYSRLRLFKLVLLNIAFAGASELVREVGMDWMSQDLAARLSTRAAQGIGAGLLTARLGIKAMELCRPLPWIDDDKPRLGDFRRQLIGQVKETLQKGKTPSEK</sequence>
<keyword id="KW-0997">Cell inner membrane</keyword>
<keyword id="KW-1003">Cell membrane</keyword>
<keyword id="KW-0472">Membrane</keyword>
<keyword id="KW-1185">Reference proteome</keyword>
<keyword id="KW-0812">Transmembrane</keyword>
<keyword id="KW-1133">Transmembrane helix</keyword>
<protein>
    <recommendedName>
        <fullName evidence="1">UPF0283 membrane protein YcjF</fullName>
    </recommendedName>
</protein>
<evidence type="ECO:0000255" key="1">
    <source>
        <dbReference type="HAMAP-Rule" id="MF_01085"/>
    </source>
</evidence>
<gene>
    <name evidence="1" type="primary">ycjF</name>
    <name type="ordered locus">ECS88_1464</name>
</gene>
<proteinExistence type="inferred from homology"/>
<feature type="chain" id="PRO_1000136880" description="UPF0283 membrane protein YcjF">
    <location>
        <begin position="1"/>
        <end position="353"/>
    </location>
</feature>
<feature type="transmembrane region" description="Helical" evidence="1">
    <location>
        <begin position="70"/>
        <end position="90"/>
    </location>
</feature>
<feature type="transmembrane region" description="Helical" evidence="1">
    <location>
        <begin position="100"/>
        <end position="120"/>
    </location>
</feature>
<feature type="transmembrane region" description="Helical" evidence="1">
    <location>
        <begin position="213"/>
        <end position="233"/>
    </location>
</feature>
<accession>B7MLZ8</accession>
<comment type="subcellular location">
    <subcellularLocation>
        <location evidence="1">Cell inner membrane</location>
        <topology evidence="1">Multi-pass membrane protein</topology>
    </subcellularLocation>
</comment>
<comment type="similarity">
    <text evidence="1">Belongs to the UPF0283 family.</text>
</comment>
<organism>
    <name type="scientific">Escherichia coli O45:K1 (strain S88 / ExPEC)</name>
    <dbReference type="NCBI Taxonomy" id="585035"/>
    <lineage>
        <taxon>Bacteria</taxon>
        <taxon>Pseudomonadati</taxon>
        <taxon>Pseudomonadota</taxon>
        <taxon>Gammaproteobacteria</taxon>
        <taxon>Enterobacterales</taxon>
        <taxon>Enterobacteriaceae</taxon>
        <taxon>Escherichia</taxon>
    </lineage>
</organism>